<name>RUVA_ECOLI</name>
<comment type="function">
    <text evidence="1 3 4 5 6 7 9 10 11 12 13 16 17 21 22 23 25 27 30 32 36">The RuvA-RuvB-RuvC complex processes Holliday junction (HJ) DNA during genetic recombination and DNA repair (PubMed:21531731, PubMed:6374379). The RuvA-RuvB complex plays an important role in the rescue of blocked DNA replication forks via replication fork reversal (RFR); RFR and homologous recombination required for UV light survival can be separated (PubMed:16424908, PubMed:18942176, PubMed:21531731, PubMed:9814711). The RuvA-RuvB complex promotes Holliday junction (HJ) branch migration. RuvA binds to HJ cruciform DNA, conferring on it an open structure (PubMed:10890893, PubMed:7885479, PubMed:9628481). In the presence of RuvB, ATP and Mg(2+) the junction is dissociated; hydrolyzable (d)NTPs can replace ATP but other analogs cannot (PubMed:10772859, PubMed:10890893, PubMed:1608954, PubMed:1617728, PubMed:1833759, PubMed:7885479, PubMed:8393934, PubMed:9628481). The RuvB hexamer acts as a pump, pulling dsDNA into and through the RuvAB complex (PubMed:9078376). Can bypass UV-induced lesions (PubMed:1617728) and physically cross-linked DNA strands (PubMed:10662672). RuvA gives specificity by binding to cruciform junctions, while the RuvB ATPase provides the motor force for branch migration; excess RuvB can promote branch migration in the absence of RuvA (PubMed:10662672, PubMed:1617728). Overexpression of RuvA alone leads to UV sensitivity (PubMed:2164626). RuvA stimulates the weak ATPase activity of RuvB in the presence of DNA; the addition of HJ DNA further stimulates ATPase about 10-fold (PubMed:1435721, PubMed:1833759, PubMed:8393934). Inhibits RuvC endoDNase activity by binding to HJ DNA, including DNA to which RuvC is already bound (PubMed:9000618). Does not bind dsDNA (PubMed:11080172). May act as a collar that slides at HJ which promotes branch migration while inhibiting other DNA remodeling activities (Probable).</text>
</comment>
<comment type="function">
    <text evidence="2 28">An in vitro resolvase system that forms and processes HJ has been reconstituted with DNA substrates, RuvA, RuvB and RuvC. RuvA-RuvB increases the rate of strand exchange (branch migration), dissociates the RecA filament and allows RuvC to cleave in both orientations at the cruciform junction (PubMed:10421637, PubMed:9160752). HJ-RuvA-RuvB-RuvC complexes resolve Holliday junctions and also undergo branch migration, providing evidence for a coupled branch migration/HJ resolution reaction (PubMed:10421637).</text>
</comment>
<comment type="cofactor">
    <cofactor evidence="10">
        <name>Mg(2+)</name>
        <dbReference type="ChEBI" id="CHEBI:18420"/>
    </cofactor>
    <text evidence="10">Branch migration by the RuvA-RuvB complex requires Mg(2+).</text>
</comment>
<comment type="subunit">
    <text evidence="2 4 5 7 8 16 22 23 24 25 26 28 29 30 31">Homotetramer (PubMed:10772859, PubMed:10890893, PubMed:1435721, PubMed:7885479, PubMed:8832889, PubMed:9493263, PubMed:9628481). Forms a stable RuvA-RuvB-Holliday junction (HJ) complex in the presence of non-hydrolyzable (d)NTPs; in the presence of hydrolyzable (d)NTPs branch migration occurs (PubMed:7885479, PubMed:8393934). In electron microscopic images the complex is formed by 2 oppositely facing RuvB hexamers sandwiching possibly 2 RuvA tetramers at cruciform DNA structures (PubMed:7885479, PubMed:9047358). In E.coli X-ray structures only 1 RuvA tetramer binds to HJ (complex I); however in M.leprae and T.thermophilus, 2 RuvA tetramers bind the HJ (complex II) (PubMed:10890893, PubMed:9628481). Mutagenesis experiments that prevent RuvA complex II formation on HJ DNA have impaired function, suggesting both complex I and complex II are physiologically important. Y-junction resolution is normal in these mutants, further suggesting each RuvA tetramer supports the activity of one RuvB hexamer. Mutants that don't make complex II are impaired in replication fork reversal (RFR), suggesting complex II exists in vivo (PubMed:15556943, PubMed:21531731). Forms a complex with RuvB without DNA; RuvA-RuvC complexes were not detected in the absence of DNA (PubMed:9160752). Can form complexes with RuvC and HJ DNA which inhibits RuvC activity (PubMed:15556943, PubMed:21531731, PubMed:9000618, PubMed:9637927). In the presence of HJ DNA a DNA-RuvA-RuvB-RuvC complex forms with 2 rings of RuvB that resolves upon addition of ATP. Upon HJ resolution the protein complex dissociates from DNA (PubMed:10421637, PubMed:9637927).</text>
</comment>
<comment type="interaction">
    <interactant intactId="EBI-555119">
        <id>P0A809</id>
    </interactant>
    <interactant intactId="EBI-555119">
        <id>P0A809</id>
        <label>ruvA</label>
    </interactant>
    <organismsDiffer>false</organismsDiffer>
    <experiments>5</experiments>
</comment>
<comment type="interaction">
    <interactant intactId="EBI-555119">
        <id>P0A809</id>
    </interactant>
    <interactant intactId="EBI-557878">
        <id>P0A812</id>
        <label>ruvB</label>
    </interactant>
    <organismsDiffer>false</organismsDiffer>
    <experiments>5</experiments>
</comment>
<comment type="interaction">
    <interactant intactId="EBI-555119">
        <id>P0A809</id>
    </interactant>
    <interactant intactId="EBI-1123014">
        <id>P0A814</id>
        <label>ruvC</label>
    </interactant>
    <organismsDiffer>false</organismsDiffer>
    <experiments>4</experiments>
</comment>
<comment type="subcellular location">
    <subcellularLocation>
        <location evidence="1 15">Cytoplasm</location>
    </subcellularLocation>
    <text>In 15% of cell localizes to discrete nucleoid foci (probable DNA damage sites) upon treatment with mitomycin C (MMC) for 2 hours.</text>
</comment>
<comment type="induction">
    <text evidence="14 19 20">Part of the ruvA-ruvB operon. Expression of the ruv region is induced by damage to DNA and is regulated by LexA as part of the SOS response. RuvA and RuvB are also involved in mutagenesis induced by UV and X irradiation and by some chemicals (PubMed:2842314, PubMed:3279394). Induced by hydroxyurea (PubMed:20005847).</text>
</comment>
<comment type="domain">
    <text evidence="4 5 6 24 29 30">Has three domains with a flexible linker between the domains II and III, and assumes an 'L' shape. Domain III has weak interactions with the adjacent subunit (PubMed:10890893, PubMed:8832889, PubMed:9493263, PubMed:9628481). In complex with Holliday junction (HJ) DNA, an approximately square planar DNA molecule is bound to the tetramer's concave face, with the DNA accessible to solution on one side. Domain III moves 4-5 Angstroms toward the protein-DNA interface upon DNA binding (PubMed:10890893, PubMed:9628481). The isolated N-terminus (domains I and II) forms tetramers and binds HJ DNA but does not bind RuvB (PubMed:10772859, PubMed:9493263). Alterations of bulky residues on the surface of domain III prevent binding to RuvB (PubMed:9493263). Domains I and II crystallize with the same tetrameric structure and are dominant negative to wild-type in vivo. In intact protein, domain III is quite flexible in solution. Isolated domain III inhibits the ATPase activity of RuvB (PubMed:10772859). The acidic pin (Glu-55 and Asp-56) seems to push the DNA backbone away from the HJ/RuvA complex center. It prevents binding to non-HJ dsDNA and constrains the rate of branch migration (PubMed:10890893, PubMed:11080172).</text>
</comment>
<comment type="disruption phenotype">
    <text evidence="4 13 17 18 21 29 32">Sensitive to radiation, filamentous growth after transient inhibition of DNA synthesis, little effect on conjugal recombination in wild-type strains (PubMed:6374379). Increased sensitivity to mitomycin and UV light (PubMed:10772859, PubMed:18942176, PubMed:2164626, PubMed:2693946, PubMed:9493263). Suppresses lethality in recB-recC and dnaB temperature-sensitive mutants (PubMed:9814711).</text>
</comment>
<comment type="similarity">
    <text evidence="1">Belongs to the RuvA family.</text>
</comment>
<accession>P0A809</accession>
<accession>P08576</accession>
<sequence length="203" mass="22086">MIGRLRGIIIEKQPPLVLIEVGGVGYEVHMPMTCFYELPEAGQEAIVFTHFVVREDAQLLYGFNNKQERTLFKELIKTNGVGPKLALAILSGMSAQQFVNAVEREEVGALVKLPGIGKKTAERLIVEMKDRFKGLHGDLFTPAADLVLTSPASPATDDAEQEAVAALVALGYKPQEASRMVSKIARPDASSETLIREALRAAL</sequence>
<gene>
    <name evidence="1 33 34" type="primary">ruvA</name>
    <name type="ordered locus">b1861</name>
    <name type="ordered locus">JW1850</name>
</gene>
<reference evidence="41" key="1">
    <citation type="journal article" date="1988" name="Nucleic Acids Res.">
        <title>Nucleotide sequencing of the ruv region of Escherichia coli K-12 reveals a LexA regulated operon encoding two genes.</title>
        <authorList>
            <person name="Benson F.E."/>
            <person name="Illing G.T."/>
            <person name="Sharples G.J."/>
            <person name="Lloyd R.G."/>
        </authorList>
    </citation>
    <scope>NUCLEOTIDE SEQUENCE [GENOMIC DNA]</scope>
    <scope>INDUCTION</scope>
    <scope>OPERON STRUCTURE</scope>
    <source>
        <strain>K12</strain>
    </source>
</reference>
<reference evidence="37" key="2">
    <citation type="journal article" date="1988" name="J. Bacteriol.">
        <title>Structure and regulation of the Escherichia coli ruv operon involved in DNA repair and recombination.</title>
        <authorList>
            <person name="Shinagawa H."/>
            <person name="Makino K."/>
            <person name="Amemura M."/>
            <person name="Kimura S."/>
            <person name="Iwasaki H."/>
            <person name="Nakata A."/>
        </authorList>
    </citation>
    <scope>NUCLEOTIDE SEQUENCE [GENOMIC DNA]</scope>
    <scope>INDUCTION BY</scope>
    <scope>OPERON STRUCTURE</scope>
</reference>
<reference evidence="38" key="3">
    <citation type="journal article" date="1996" name="DNA Res.">
        <title>A 460-kb DNA sequence of the Escherichia coli K-12 genome corresponding to the 40.1-50.0 min region on the linkage map.</title>
        <authorList>
            <person name="Itoh T."/>
            <person name="Aiba H."/>
            <person name="Baba T."/>
            <person name="Fujita K."/>
            <person name="Hayashi K."/>
            <person name="Inada T."/>
            <person name="Isono K."/>
            <person name="Kasai H."/>
            <person name="Kimura S."/>
            <person name="Kitakawa M."/>
            <person name="Kitagawa M."/>
            <person name="Makino K."/>
            <person name="Miki T."/>
            <person name="Mizobuchi K."/>
            <person name="Mori H."/>
            <person name="Mori T."/>
            <person name="Motomura K."/>
            <person name="Nakade S."/>
            <person name="Nakamura Y."/>
            <person name="Nashimoto H."/>
            <person name="Nishio Y."/>
            <person name="Oshima T."/>
            <person name="Saito N."/>
            <person name="Sampei G."/>
            <person name="Seki Y."/>
            <person name="Sivasundaram S."/>
            <person name="Tagami H."/>
            <person name="Takeda J."/>
            <person name="Takemoto K."/>
            <person name="Wada C."/>
            <person name="Yamamoto Y."/>
            <person name="Horiuchi T."/>
        </authorList>
    </citation>
    <scope>NUCLEOTIDE SEQUENCE [LARGE SCALE GENOMIC DNA]</scope>
    <source>
        <strain>K12 / W3110 / ATCC 27325 / DSM 5911</strain>
    </source>
</reference>
<reference evidence="38" key="4">
    <citation type="journal article" date="1997" name="Science">
        <title>The complete genome sequence of Escherichia coli K-12.</title>
        <authorList>
            <person name="Blattner F.R."/>
            <person name="Plunkett G. III"/>
            <person name="Bloch C.A."/>
            <person name="Perna N.T."/>
            <person name="Burland V."/>
            <person name="Riley M."/>
            <person name="Collado-Vides J."/>
            <person name="Glasner J.D."/>
            <person name="Rode C.K."/>
            <person name="Mayhew G.F."/>
            <person name="Gregor J."/>
            <person name="Davis N.W."/>
            <person name="Kirkpatrick H.A."/>
            <person name="Goeden M.A."/>
            <person name="Rose D.J."/>
            <person name="Mau B."/>
            <person name="Shao Y."/>
        </authorList>
    </citation>
    <scope>NUCLEOTIDE SEQUENCE [LARGE SCALE GENOMIC DNA]</scope>
    <source>
        <strain>K12 / MG1655 / ATCC 47076</strain>
    </source>
</reference>
<reference evidence="40" key="5">
    <citation type="journal article" date="2006" name="Mol. Syst. Biol.">
        <title>Highly accurate genome sequences of Escherichia coli K-12 strains MG1655 and W3110.</title>
        <authorList>
            <person name="Hayashi K."/>
            <person name="Morooka N."/>
            <person name="Yamamoto Y."/>
            <person name="Fujita K."/>
            <person name="Isono K."/>
            <person name="Choi S."/>
            <person name="Ohtsubo E."/>
            <person name="Baba T."/>
            <person name="Wanner B.L."/>
            <person name="Mori H."/>
            <person name="Horiuchi T."/>
        </authorList>
    </citation>
    <scope>NUCLEOTIDE SEQUENCE [LARGE SCALE GENOMIC DNA]</scope>
    <source>
        <strain>K12 / W3110 / ATCC 27325 / DSM 5911</strain>
    </source>
</reference>
<reference evidence="39" key="6">
    <citation type="journal article" date="1991" name="J. Bacteriol.">
        <title>Molecular analysis of the Escherichia coli ruvC gene, which encodes a Holliday junction-specific endonuclease.</title>
        <authorList>
            <person name="Takahagi M."/>
            <person name="Iwasaki H."/>
            <person name="Nakata A."/>
            <person name="Shinagawa H."/>
        </authorList>
    </citation>
    <scope>NUCLEOTIDE SEQUENCE [GENOMIC DNA] OF 1-29</scope>
    <source>
        <strain>K12</strain>
    </source>
</reference>
<reference key="7">
    <citation type="journal article" date="1991" name="Proc. Natl. Acad. Sci. U.S.A.">
        <title>SOS-inducible DNA repair proteins, RuvA and RuvB, of Escherichia coli: functional interactions between RuvA and RuvB for ATP hydrolysis and renaturation of the cruciform structure in supercoiled DNA.</title>
        <authorList>
            <person name="Shiba T."/>
            <person name="Iwasaki H."/>
            <person name="Nakata A."/>
            <person name="Shinagawa H."/>
        </authorList>
    </citation>
    <scope>PROTEIN SEQUENCE OF 1-10</scope>
    <scope>FUNCTION</scope>
    <scope>DNA-BINDING</scope>
</reference>
<reference key="8">
    <citation type="journal article" date="1984" name="Mol. Gen. Genet.">
        <title>Effect of ruv mutations on recombination and DNA repair in Escherichia coli K12.</title>
        <authorList>
            <person name="Lloyd R.G."/>
            <person name="Benson F.E."/>
            <person name="Shurvinton C.E."/>
        </authorList>
    </citation>
    <scope>FUNCTION</scope>
    <scope>DISRUPTION PHENOTYPE</scope>
    <source>
        <strain>K12</strain>
    </source>
</reference>
<reference key="9">
    <citation type="journal article" date="1989" name="Mol. Gen. Genet.">
        <title>Involvement in DNA repair of the ruvA gene of Escherichia coli.</title>
        <authorList>
            <person name="Iwasaki H."/>
            <person name="Shiba T."/>
            <person name="Nakata A."/>
            <person name="Shinagawa H."/>
        </authorList>
    </citation>
    <scope>DISRUPTION PHENOTYPE</scope>
</reference>
<reference key="10">
    <citation type="journal article" date="1990" name="Mol. Gen. Genet.">
        <title>Molecular and functional analysis of the ruv region of Escherichia coli K-12 reveals three genes involved in DNA repair and recombination.</title>
        <authorList>
            <person name="Sharples G.J."/>
            <person name="Benson F.E."/>
            <person name="Illing G.T."/>
            <person name="Lloyd R.G."/>
        </authorList>
    </citation>
    <scope>DISRUPTION PHENOTYPE</scope>
    <source>
        <strain>K12 / AB1157</strain>
    </source>
</reference>
<reference key="11">
    <citation type="journal article" date="1992" name="Cell">
        <title>ATP-dependent branch migration of Holliday junctions promoted by the RuvA and RuvB proteins of E. coli.</title>
        <authorList>
            <person name="Tsaneva I.R."/>
            <person name="Mueller B."/>
            <person name="West S.C."/>
        </authorList>
    </citation>
    <scope>FUNCTION</scope>
    <scope>COFACTOR</scope>
</reference>
<reference key="12">
    <citation type="journal article" date="1992" name="Mol. Gen. Genet.">
        <title>Purification and properties of the RuvA and RuvB proteins of Escherichia coli.</title>
        <authorList>
            <person name="Tsaneva I.R."/>
            <person name="Illing G."/>
            <person name="Lloyd R.G."/>
            <person name="West S.C."/>
        </authorList>
    </citation>
    <scope>FUNCTION</scope>
    <scope>SUBUNIT</scope>
</reference>
<reference key="13">
    <citation type="journal article" date="1992" name="Proc. Natl. Acad. Sci. U.S.A.">
        <title>Interaction of Escherichia coli RuvA and RuvB proteins with synthetic Holliday junctions.</title>
        <authorList>
            <person name="Parsons C.A."/>
            <person name="Tsaneva I."/>
            <person name="Lloyd R.G."/>
            <person name="West S.C."/>
        </authorList>
    </citation>
    <scope>PROBABLE FUNCTION IN HOLLIDAY JUNCTION</scope>
    <scope>BINDS TO HOLLIDAY JUNCTION DNA</scope>
    <scope>COFACTOR</scope>
</reference>
<reference key="14">
    <citation type="journal article" date="1993" name="J. Mol. Biol.">
        <title>Formation of a RuvAB-Holliday junction complex in vitro.</title>
        <authorList>
            <person name="Parsons C.A."/>
            <person name="West S.C."/>
        </authorList>
    </citation>
    <scope>FUNCTION</scope>
    <scope>COFACTOR</scope>
    <scope>SUBUNIT</scope>
</reference>
<reference key="15">
    <citation type="journal article" date="1995" name="Nature">
        <title>Structure of a multisubunit complex that promotes DNA branch migration.</title>
        <authorList>
            <person name="Parsons C.A."/>
            <person name="Stasiak A."/>
            <person name="Bennett R.J."/>
            <person name="West S.C."/>
        </authorList>
    </citation>
    <scope>STRUCTURE BY ELECTRON MICROSCOPY</scope>
    <scope>BINDS TO HOLLIDAY JUNCTION DNA</scope>
    <scope>SUBUNIT</scope>
</reference>
<reference key="16">
    <citation type="journal article" date="1996" name="Genes Cells">
        <title>The directionality of RuvAB-mediated branch migration: in vitro studies with three-armed junctions.</title>
        <authorList>
            <person name="Hiom K."/>
            <person name="Tsaneva I.R."/>
            <person name="West S.C."/>
        </authorList>
    </citation>
    <scope>FUNCTION</scope>
    <scope>SUBUNIT</scope>
    <scope>DNA-BINDING</scope>
</reference>
<reference key="17">
    <citation type="journal article" date="1996" name="J. Mol. Biol.">
        <title>Interactions between RuvA and RuvC at Holliday junctions: inhibition of junction cleavage and formation of a RuvA-RuvC-DNA complex.</title>
        <authorList>
            <person name="Whitby M.C."/>
            <person name="Bolt E.L."/>
            <person name="Chan S.N."/>
            <person name="Lloyd R.G."/>
        </authorList>
    </citation>
    <scope>FUNCTION IN INHIBITING RUVC</scope>
    <scope>SUBUNIT</scope>
</reference>
<reference key="18">
    <citation type="journal article" date="1997" name="Cell">
        <title>In vitro reconstitution of the late steps of genetic recombination in E. coli.</title>
        <authorList>
            <person name="Eggleston A.K."/>
            <person name="Mitchell A.H."/>
            <person name="West S.C."/>
        </authorList>
    </citation>
    <scope>FUNCTION</scope>
    <scope>IN VITRO RECONSTITUTION</scope>
    <scope>SUBUNIT</scope>
</reference>
<reference key="19">
    <citation type="journal article" date="1997" name="J. Mol. Biol.">
        <title>Structure and subunit composition of the RuvAB-Holliday junction complex.</title>
        <authorList>
            <person name="Yu X."/>
            <person name="West S.C."/>
            <person name="Egelman E.H."/>
        </authorList>
    </citation>
    <scope>STRUCTURE BY ELECTRON MICROSCOPY</scope>
    <scope>SUBUNIT</scope>
</reference>
<reference key="20">
    <citation type="journal article" date="1998" name="Curr. Biol.">
        <title>Formation of RuvABC-Holliday junction complexes in vitro.</title>
        <authorList>
            <person name="Davies A.A."/>
            <person name="West S.C."/>
        </authorList>
    </citation>
    <scope>HOLLIDAY JUNCTION-RUVABC COMPLEX FORMATION</scope>
</reference>
<reference key="21">
    <citation type="journal article" date="1998" name="Cell">
        <title>RuvAB acts at arrested replication forks.</title>
        <authorList>
            <person name="Seigneur M."/>
            <person name="Bidnenko V."/>
            <person name="Ehrlich S.D."/>
            <person name="Michel B."/>
        </authorList>
    </citation>
    <scope>ROLE IN REPLICATION FORK REVERSAL</scope>
    <scope>DISRUPTION PHENOTYPE</scope>
</reference>
<reference key="22">
    <citation type="journal article" date="1999" name="Genes Dev.">
        <title>Assembly of the Escherichia coli RuvABC resolvasome directs the orientation of holliday junction resolution.</title>
        <authorList>
            <person name="van Gool A.J."/>
            <person name="Hajibagheri N.M."/>
            <person name="Stasiak A."/>
            <person name="West S.C."/>
        </authorList>
    </citation>
    <scope>FUNCTION</scope>
    <scope>IN VITRO RECONSTITUTION</scope>
    <scope>SUBUNIT</scope>
</reference>
<reference key="23">
    <citation type="journal article" date="2000" name="Curr. Biol.">
        <title>RuvAB-mediated branch migration does not involve extensive DNA opening within the RuvB hexamer.</title>
        <authorList>
            <person name="George H."/>
            <person name="Kuraoka I."/>
            <person name="Nauman D.A."/>
            <person name="Kobertz W.R."/>
            <person name="Wood R.D."/>
            <person name="West S.C."/>
        </authorList>
    </citation>
    <scope>FUNCTION ON CROSS-LINKED DNA</scope>
</reference>
<reference key="24">
    <citation type="journal article" date="2000" name="EMBO J.">
        <title>The acidic pin of RuvA modulates Holliday junction binding and processing by the RuvABC resolvasome.</title>
        <authorList>
            <person name="Ingleston S.M."/>
            <person name="Sharples G.J."/>
            <person name="Lloyd R.G."/>
        </authorList>
    </citation>
    <scope>FUNCTION OF ACIDIC PIN</scope>
    <scope>MOTIF</scope>
    <scope>MUTAGENESIS OF 55-GLU-ASP-56; GLU-55 AND ASP-56</scope>
</reference>
<reference key="25">
    <citation type="journal article" date="2005" name="J. Biol. Chem.">
        <title>The role of RuvA octamerization for RuvAB function in vitro and in vivo.</title>
        <authorList>
            <person name="Privezentzev C.V."/>
            <person name="Keeley A."/>
            <person name="Sigala B."/>
            <person name="Tsaneva I.R."/>
        </authorList>
    </citation>
    <scope>SUBUNIT</scope>
    <scope>MUTAGENESIS OF 122-GLU--ASP-130</scope>
</reference>
<reference key="26">
    <citation type="journal article" date="2006" name="J. Mol. Biol.">
        <title>RuvA is a sliding collar that protects Holliday junctions from unwinding while promoting branch migration.</title>
        <authorList>
            <person name="Kaplan D.L."/>
            <person name="O'Donnell M."/>
        </authorList>
    </citation>
    <scope>FUNCTION</scope>
</reference>
<reference key="27">
    <citation type="journal article" date="2006" name="EMBO J.">
        <title>RuvAB is essential for replication forks reversal in certain replication mutants.</title>
        <authorList>
            <person name="Baharoglu Z."/>
            <person name="Petranovic M."/>
            <person name="Flores M.J."/>
            <person name="Michel B."/>
        </authorList>
    </citation>
    <scope>ROLE IN REPLICATION FORK REVERSAL</scope>
</reference>
<reference key="28">
    <citation type="journal article" date="2008" name="Mol. Microbiol.">
        <title>ruvA and ruvB mutants specifically impaired for replication fork reversal.</title>
        <authorList>
            <person name="Le Masson M."/>
            <person name="Baharoglu Z."/>
            <person name="Michel B."/>
        </authorList>
    </citation>
    <scope>ROLE IN REPLICATION FORK REVERSAL</scope>
    <scope>ROLE IN MITOMYCIN C RESISTANCE</scope>
    <scope>SUBUNIT</scope>
    <scope>DISRUPTION PHENOTYPE</scope>
    <scope>MUTAGENESIS OF VAL-28; ILE-89; PRO-114; THR-120 AND VAL-164</scope>
</reference>
<reference key="29">
    <citation type="journal article" date="2009" name="Mol. Cell">
        <title>Hydroxyurea induces hydroxyl radical-mediated cell death in Escherichia coli.</title>
        <authorList>
            <person name="Davies B.W."/>
            <person name="Kohanski M.A."/>
            <person name="Simmons L.A."/>
            <person name="Winkler J.A."/>
            <person name="Collins J.J."/>
            <person name="Walker G.C."/>
        </authorList>
    </citation>
    <scope>INDUCTION BY HYDROXYUREA</scope>
    <source>
        <strain>K12 / MC4100 / ATCC 35695 / DSM 6574</strain>
    </source>
</reference>
<reference key="30">
    <citation type="journal article" date="2011" name="Mol. Microbiol.">
        <title>A dual function of the CRISPR-Cas system in bacterial antivirus immunity and DNA repair.</title>
        <authorList>
            <person name="Babu M."/>
            <person name="Beloglazova N."/>
            <person name="Flick R."/>
            <person name="Graham C."/>
            <person name="Skarina T."/>
            <person name="Nocek B."/>
            <person name="Gagarinova A."/>
            <person name="Pogoutse O."/>
            <person name="Brown G."/>
            <person name="Binkowski A."/>
            <person name="Phanse S."/>
            <person name="Joachimiak A."/>
            <person name="Koonin E.V."/>
            <person name="Savchenko A."/>
            <person name="Emili A."/>
            <person name="Greenblatt J."/>
            <person name="Edwards A.M."/>
            <person name="Yakunin A.F."/>
        </authorList>
    </citation>
    <scope>SUBCELLULAR LOCATION</scope>
    <source>
        <strain>K12</strain>
    </source>
</reference>
<reference key="31">
    <citation type="journal article" date="2011" name="J. Biol. Chem.">
        <title>Formation of a stable RuvA protein double tetramer is required for efficient branch migration in vitro and for replication fork reversal in vivo.</title>
        <authorList>
            <person name="Bradley A.S."/>
            <person name="Baharoglu Z."/>
            <person name="Niewiarowski A."/>
            <person name="Michel B."/>
            <person name="Tsaneva I.R."/>
        </authorList>
    </citation>
    <scope>FUNCTION</scope>
    <scope>SUBUNIT</scope>
    <scope>MUTAGENESIS OF 119-LYS--GLU-127</scope>
</reference>
<reference evidence="45" key="32">
    <citation type="journal article" date="1996" name="Science">
        <title>Crystal structure of DNA recombination protein RuvA and a model for its binding to the Holliday junction.</title>
        <authorList>
            <person name="Rafferty J.B."/>
            <person name="Sedelnikova S.E."/>
            <person name="Hargreaves D."/>
            <person name="Artymiuk P.J."/>
            <person name="Baker P.J."/>
            <person name="Sharples G.J."/>
            <person name="Mahdi A.A."/>
            <person name="Lloyd R.G."/>
            <person name="Rice D.W."/>
        </authorList>
    </citation>
    <scope>X-RAY CRYSTALLOGRAPHY (1.9 ANGSTROMS)</scope>
    <scope>SUBUNIT</scope>
    <scope>DOMAIN</scope>
    <scope>MOTIF</scope>
</reference>
<reference evidence="43" key="33">
    <citation type="journal article" date="1998" name="Nat. Struct. Biol.">
        <title>Crystal structure of E.coli RuvA with bound DNA Holliday junction at 6-A resolution.</title>
        <authorList>
            <person name="Hargreaves D."/>
            <person name="Rice D.W."/>
            <person name="Sedelnikova S.E."/>
            <person name="Artymiuk P.J."/>
            <person name="Lloyd R.G."/>
            <person name="Rafferty J.B."/>
        </authorList>
    </citation>
    <scope>X-RAY CRYSTALLOGRAPHY (6.0 ANGSTROMS) IN COMPLEX WITH HOLLIDAY JUNCTION DNA</scope>
    <scope>SUBUNIT</scope>
    <scope>DOMAIN</scope>
    <scope>DNA-BINDING</scope>
</reference>
<reference evidence="47" key="34">
    <citation type="journal article" date="1998" name="Structure">
        <title>Functional analyses of the domain structure in the Holliday junction binding protein RuvA.</title>
        <authorList>
            <person name="Nishino T."/>
            <person name="Ariyoshi M."/>
            <person name="Iwasaki H."/>
            <person name="Shinagawa H."/>
            <person name="Morikawa K."/>
        </authorList>
    </citation>
    <scope>X-RAY CRYSTALLOGRAPHY (2.5 ANGSTROMS)</scope>
    <scope>SUBUNIT</scope>
    <scope>DOMAIN</scope>
    <scope>DISRUPTION PHENOTYPE</scope>
    <scope>MUTAGENESIS OF TYR-36; LEU-110; LEU-167; LEU-170; TYR-172 AND LEU-199</scope>
</reference>
<reference evidence="46" key="35">
    <citation type="journal article" date="2000" name="J. Mol. Biol.">
        <title>Modulation of RuvB function by the mobile domain III of the Holliday junction recognition protein RuvA.</title>
        <authorList>
            <person name="Nishino T."/>
            <person name="Iwasaki H."/>
            <person name="Kataoka M."/>
            <person name="Ariyoshi M."/>
            <person name="Fujita T."/>
            <person name="Shinagawa H."/>
            <person name="Morikawa K."/>
        </authorList>
    </citation>
    <scope>X-RAY CRYSTALLOGRAPHY (2.5 ANGSTROMS) OF 1-149</scope>
    <scope>FUNCTION</scope>
    <scope>SUBUNIT</scope>
    <scope>DOMAIN</scope>
    <scope>DISRUPTION PHENOTYPE</scope>
    <scope>MUTAGENESIS OF LEU-170</scope>
</reference>
<reference evidence="44" key="36">
    <citation type="journal article" date="2000" name="Proc. Natl. Acad. Sci. U.S.A.">
        <title>Crystal structure of the holliday junction DNA in complex with a single RuvA tetramer.</title>
        <authorList>
            <person name="Ariyoshi M."/>
            <person name="Nishino T."/>
            <person name="Iwasaki H."/>
            <person name="Shinagawa H."/>
            <person name="Morikawa K."/>
        </authorList>
    </citation>
    <scope>X-RAY CRYSTALLOGRAPHY (3.10 ANGSTROMS) IN COMPLEX WITH HOLLIDAY JUNCTION DNA</scope>
    <scope>SUBUNIT</scope>
    <scope>DOMAIN</scope>
    <scope>MOTIF</scope>
    <scope>DNA-BINDING</scope>
</reference>
<organism>
    <name type="scientific">Escherichia coli (strain K12)</name>
    <dbReference type="NCBI Taxonomy" id="83333"/>
    <lineage>
        <taxon>Bacteria</taxon>
        <taxon>Pseudomonadati</taxon>
        <taxon>Pseudomonadota</taxon>
        <taxon>Gammaproteobacteria</taxon>
        <taxon>Enterobacterales</taxon>
        <taxon>Enterobacteriaceae</taxon>
        <taxon>Escherichia</taxon>
    </lineage>
</organism>
<proteinExistence type="evidence at protein level"/>
<feature type="chain" id="PRO_0000094629" description="Holliday junction branch migration complex subunit RuvA">
    <location>
        <begin position="1"/>
        <end position="203"/>
    </location>
</feature>
<feature type="region of interest" description="N-terminal proteolytic domain, tetramerizes and binds DNA, does not bind RuvB" evidence="29">
    <location>
        <begin position="1"/>
        <end position="144"/>
    </location>
</feature>
<feature type="region of interest" description="Domain I" evidence="1 24 29 30">
    <location>
        <begin position="1"/>
        <end position="64"/>
    </location>
</feature>
<feature type="region of interest" description="Domain II" evidence="1 24 29 30">
    <location>
        <begin position="65"/>
        <end position="142"/>
    </location>
</feature>
<feature type="region of interest" description="Flexible linker" evidence="1 24 29 30">
    <location>
        <begin position="143"/>
        <end position="155"/>
    </location>
</feature>
<feature type="region of interest" description="Domain III" evidence="1 24 29 30">
    <location>
        <begin position="156"/>
        <end position="203"/>
    </location>
</feature>
<feature type="short sequence motif" description="Acidic pin" evidence="5 24">
    <location>
        <begin position="55"/>
        <end position="56"/>
    </location>
</feature>
<feature type="binding site" evidence="5 42">
    <location>
        <begin position="78"/>
        <end position="85"/>
    </location>
    <ligand>
        <name>DNA</name>
        <dbReference type="ChEBI" id="CHEBI:16991"/>
    </ligand>
</feature>
<feature type="binding site" evidence="5 42">
    <location>
        <begin position="114"/>
        <end position="117"/>
    </location>
    <ligand>
        <name>DNA</name>
        <dbReference type="ChEBI" id="CHEBI:16991"/>
    </ligand>
</feature>
<feature type="binding site" evidence="5 42">
    <location>
        <begin position="119"/>
        <end position="120"/>
    </location>
    <ligand>
        <name>DNA</name>
        <dbReference type="ChEBI" id="CHEBI:16991"/>
    </ligand>
</feature>
<feature type="binding site" evidence="5 42">
    <location>
        <position position="123"/>
    </location>
    <ligand>
        <name>DNA</name>
        <dbReference type="ChEBI" id="CHEBI:16991"/>
    </ligand>
</feature>
<feature type="mutagenesis site" description="Defective replication fork reversal (RFR), UV light resistant, resistant to mitomycin C (MMC)." evidence="13">
    <original>V</original>
    <variation>G</variation>
    <location>
        <position position="28"/>
    </location>
</feature>
<feature type="mutagenesis site" description="Partially complements deletion, tetramerizes, binds RuvB, branch migration by RuvA-RuvB is normal." evidence="29">
    <original>Y</original>
    <variation>A</variation>
    <location>
        <position position="36"/>
    </location>
</feature>
<feature type="mutagenesis site" description="Reduced binding of Holliday junction (HJ) DNA, binds dsDNA, decreases HJ resolution with RuvAB, inhibits chi resolution with RuvABC, nearly 10000-fold decrease in UV resistance." evidence="6">
    <original>ED</original>
    <variation>RK</variation>
    <location>
        <begin position="55"/>
        <end position="56"/>
    </location>
</feature>
<feature type="mutagenesis site" description="Does not bind dsDNA, slightly increases HJ resolution with RuvAB, 20% decreased chi resolution with RuvABC, no effect in vivo." evidence="6">
    <original>E</original>
    <variation>D</variation>
    <location>
        <position position="55"/>
    </location>
</feature>
<feature type="mutagenesis site" description="Reduced binding of HJ DNA, binds dsDNA, increases HJ resolution with RuvAB, 40% decreased chi resolution with RuvABC, 100-fold decrease in UV resistance." evidence="6">
    <original>E</original>
    <variation>Q</variation>
    <location>
        <position position="55"/>
    </location>
</feature>
<feature type="mutagenesis site" description="Binds dsDNA, increases HJ resolution with RuvAB, 1000-fold decrease in UV resistance." evidence="6">
    <original>E</original>
    <variation>R</variation>
    <location>
        <position position="55"/>
    </location>
</feature>
<feature type="mutagenesis site" description="Binds dsDNA, increases HJ resolution with RuvAB, no chi resolution with RuvABC." evidence="6">
    <original>D</original>
    <variation>K</variation>
    <location>
        <position position="56"/>
    </location>
</feature>
<feature type="mutagenesis site" description="Reduced binding of HJ DNA, binds dsDNA, increases HJ resolution with RuvAB." evidence="6">
    <original>D</original>
    <variation>N</variation>
    <location>
        <position position="56"/>
    </location>
</feature>
<feature type="mutagenesis site" description="Defective RFR, UV light resistant, sensitive to MMC." evidence="13">
    <original>I</original>
    <variation>N</variation>
    <location>
        <position position="89"/>
    </location>
</feature>
<feature type="mutagenesis site" description="Does not complement deletion, tetramerizes, binds RuvB, does not bind DNA, no migration by RuvA-RuvB." evidence="29">
    <original>L</original>
    <variation>A</variation>
    <location>
        <position position="110"/>
    </location>
</feature>
<feature type="mutagenesis site" description="Defective RFR, UV light resistant, resistant to MMC, may interact poorly with RuvB." evidence="13">
    <original>P</original>
    <variation>S</variation>
    <location>
        <position position="114"/>
    </location>
</feature>
<feature type="mutagenesis site" description="In RuvA2KaP; tetramerizes, weakly octamerizes, binds RuvB, binds HJ DNA, makes weak complex II on HJ, 50% stimulation of RuvB ATPase, poor branch migration, does not inhibit RuvC, no defect in HJ processing in vivo, does not promote RFR in vivo." evidence="16">
    <original>KTAERLIVE</original>
    <variation>ATAERLIVR</variation>
    <location>
        <begin position="119"/>
        <end position="127"/>
    </location>
</feature>
<feature type="mutagenesis site" description="Suppresses the RuvB 'P220S' mutation, restores wild-type phenotype." evidence="13">
    <original>T</original>
    <variation>N</variation>
    <location>
        <position position="120"/>
    </location>
</feature>
<feature type="mutagenesis site" description="In RuvA3m; does not make complex II with HJ, tetramerizes, binds HJ DNA, binds RuvB and stimulates its helicase activity, has decreased branch migration activity, alters RuvA-RuvC interaction, does not complement a deletion mutant, has extra abnormal DNA-binding." evidence="8">
    <original>ERLIVEMKD</original>
    <variation>RRLIVRMKR</variation>
    <location>
        <begin position="122"/>
        <end position="130"/>
    </location>
</feature>
<feature type="mutagenesis site" description="Defective RFR, UV light resistant, resistant to MMC, may interact poorly with RuvB." evidence="13">
    <original>V</original>
    <variation>I</variation>
    <location>
        <position position="164"/>
    </location>
</feature>
<feature type="mutagenesis site" description="Does not complement deletion, tetramerizes, does not bind RuvB, dominant negative to wild-type (wt)." evidence="29">
    <original>L</original>
    <variation>A</variation>
    <location>
        <position position="167"/>
    </location>
</feature>
<feature type="mutagenesis site" description="Does not complement deletion, tetramerizes, does not bind RuvB, dominant negative to wt. Alters conformation of isolated domain III." evidence="4 29">
    <original>L</original>
    <variation>A</variation>
    <location>
        <position position="170"/>
    </location>
</feature>
<feature type="mutagenesis site" description="Does not complement deletion, tetramerizes, does not bind RuvB, dominant negative to wt." evidence="29">
    <original>Y</original>
    <variation>A</variation>
    <location>
        <position position="172"/>
    </location>
</feature>
<feature type="mutagenesis site" description="Does not complement deletion, tetramerizes, does not bind RuvB, dominant negative to wt." evidence="29">
    <original>L</original>
    <variation>A</variation>
    <location>
        <position position="199"/>
    </location>
</feature>
<feature type="sequence conflict" description="In Ref. 1; CAA30119." evidence="35" ref="1">
    <original>A</original>
    <variation>R</variation>
    <location>
        <position position="166"/>
    </location>
</feature>
<feature type="strand" evidence="49">
    <location>
        <begin position="4"/>
        <end position="13"/>
    </location>
</feature>
<feature type="strand" evidence="49">
    <location>
        <begin position="16"/>
        <end position="21"/>
    </location>
</feature>
<feature type="strand" evidence="49">
    <location>
        <begin position="24"/>
        <end position="29"/>
    </location>
</feature>
<feature type="helix" evidence="49">
    <location>
        <begin position="32"/>
        <end position="35"/>
    </location>
</feature>
<feature type="strand" evidence="49">
    <location>
        <begin position="43"/>
        <end position="54"/>
    </location>
</feature>
<feature type="strand" evidence="49">
    <location>
        <begin position="57"/>
        <end position="65"/>
    </location>
</feature>
<feature type="helix" evidence="49">
    <location>
        <begin position="66"/>
        <end position="77"/>
    </location>
</feature>
<feature type="strand" evidence="49">
    <location>
        <begin position="78"/>
        <end position="80"/>
    </location>
</feature>
<feature type="helix" evidence="49">
    <location>
        <begin position="83"/>
        <end position="92"/>
    </location>
</feature>
<feature type="helix" evidence="49">
    <location>
        <begin position="95"/>
        <end position="103"/>
    </location>
</feature>
<feature type="helix" evidence="49">
    <location>
        <begin position="107"/>
        <end position="111"/>
    </location>
</feature>
<feature type="helix" evidence="49">
    <location>
        <begin position="118"/>
        <end position="131"/>
    </location>
</feature>
<feature type="helix" evidence="49">
    <location>
        <begin position="132"/>
        <end position="134"/>
    </location>
</feature>
<feature type="turn" evidence="49">
    <location>
        <begin position="138"/>
        <end position="140"/>
    </location>
</feature>
<feature type="helix" evidence="48">
    <location>
        <begin position="144"/>
        <end position="149"/>
    </location>
</feature>
<feature type="helix" evidence="49">
    <location>
        <begin position="158"/>
        <end position="170"/>
    </location>
</feature>
<feature type="helix" evidence="49">
    <location>
        <begin position="174"/>
        <end position="183"/>
    </location>
</feature>
<feature type="helix" evidence="49">
    <location>
        <begin position="191"/>
        <end position="200"/>
    </location>
</feature>
<keyword id="KW-0002">3D-structure</keyword>
<keyword id="KW-0963">Cytoplasm</keyword>
<keyword id="KW-0903">Direct protein sequencing</keyword>
<keyword id="KW-0227">DNA damage</keyword>
<keyword id="KW-0233">DNA recombination</keyword>
<keyword id="KW-0234">DNA repair</keyword>
<keyword id="KW-0238">DNA-binding</keyword>
<keyword id="KW-1185">Reference proteome</keyword>
<keyword id="KW-0742">SOS response</keyword>
<protein>
    <recommendedName>
        <fullName evidence="1">Holliday junction branch migration complex subunit RuvA</fullName>
    </recommendedName>
</protein>
<dbReference type="EMBL" id="X07091">
    <property type="protein sequence ID" value="CAA30119.1"/>
    <property type="molecule type" value="Genomic_DNA"/>
</dbReference>
<dbReference type="EMBL" id="M21298">
    <property type="protein sequence ID" value="AAA24612.1"/>
    <property type="molecule type" value="Genomic_DNA"/>
</dbReference>
<dbReference type="EMBL" id="U00096">
    <property type="protein sequence ID" value="AAC74931.1"/>
    <property type="molecule type" value="Genomic_DNA"/>
</dbReference>
<dbReference type="EMBL" id="AP009048">
    <property type="protein sequence ID" value="BAA15672.1"/>
    <property type="molecule type" value="Genomic_DNA"/>
</dbReference>
<dbReference type="EMBL" id="D10165">
    <property type="protein sequence ID" value="BAA01034.1"/>
    <property type="molecule type" value="Genomic_DNA"/>
</dbReference>
<dbReference type="PIR" id="E64948">
    <property type="entry name" value="BVECRV"/>
</dbReference>
<dbReference type="RefSeq" id="NP_416375.1">
    <property type="nucleotide sequence ID" value="NC_000913.3"/>
</dbReference>
<dbReference type="RefSeq" id="WP_000580323.1">
    <property type="nucleotide sequence ID" value="NZ_STEB01000009.1"/>
</dbReference>
<dbReference type="PDB" id="1BDX">
    <property type="method" value="X-ray"/>
    <property type="resolution" value="6.00 A"/>
    <property type="chains" value="A/B/C/D=1-203"/>
</dbReference>
<dbReference type="PDB" id="1C7Y">
    <property type="method" value="X-ray"/>
    <property type="resolution" value="3.10 A"/>
    <property type="chains" value="A=1-203"/>
</dbReference>
<dbReference type="PDB" id="1CUK">
    <property type="method" value="X-ray"/>
    <property type="resolution" value="1.90 A"/>
    <property type="chains" value="A=1-203"/>
</dbReference>
<dbReference type="PDB" id="1D8L">
    <property type="method" value="X-ray"/>
    <property type="resolution" value="2.50 A"/>
    <property type="chains" value="A/B=1-149"/>
</dbReference>
<dbReference type="PDB" id="1HJP">
    <property type="method" value="X-ray"/>
    <property type="resolution" value="2.50 A"/>
    <property type="chains" value="A=1-203"/>
</dbReference>
<dbReference type="PDBsum" id="1BDX"/>
<dbReference type="PDBsum" id="1C7Y"/>
<dbReference type="PDBsum" id="1CUK"/>
<dbReference type="PDBsum" id="1D8L"/>
<dbReference type="PDBsum" id="1HJP"/>
<dbReference type="SMR" id="P0A809"/>
<dbReference type="BioGRID" id="4259338">
    <property type="interactions" value="153"/>
</dbReference>
<dbReference type="BioGRID" id="850726">
    <property type="interactions" value="1"/>
</dbReference>
<dbReference type="ComplexPortal" id="CPX-5124">
    <property type="entry name" value="RuvAB Holliday junction DNA helicase complex"/>
</dbReference>
<dbReference type="DIP" id="DIP-48064N"/>
<dbReference type="FunCoup" id="P0A809">
    <property type="interactions" value="332"/>
</dbReference>
<dbReference type="IntAct" id="P0A809">
    <property type="interactions" value="9"/>
</dbReference>
<dbReference type="STRING" id="511145.b1861"/>
<dbReference type="jPOST" id="P0A809"/>
<dbReference type="PaxDb" id="511145-b1861"/>
<dbReference type="EnsemblBacteria" id="AAC74931">
    <property type="protein sequence ID" value="AAC74931"/>
    <property type="gene ID" value="b1861"/>
</dbReference>
<dbReference type="GeneID" id="75057740"/>
<dbReference type="GeneID" id="946369"/>
<dbReference type="KEGG" id="ecj:JW1850"/>
<dbReference type="KEGG" id="eco:b1861"/>
<dbReference type="KEGG" id="ecoc:C3026_10600"/>
<dbReference type="PATRIC" id="fig|1411691.4.peg.387"/>
<dbReference type="EchoBASE" id="EB0916"/>
<dbReference type="eggNOG" id="COG0632">
    <property type="taxonomic scope" value="Bacteria"/>
</dbReference>
<dbReference type="HOGENOM" id="CLU_087936_0_0_6"/>
<dbReference type="InParanoid" id="P0A809"/>
<dbReference type="OMA" id="ECAGVGY"/>
<dbReference type="OrthoDB" id="5293449at2"/>
<dbReference type="PhylomeDB" id="P0A809"/>
<dbReference type="BioCyc" id="EcoCyc:EG10923-MONOMER"/>
<dbReference type="BioCyc" id="MetaCyc:EG10923-MONOMER"/>
<dbReference type="EvolutionaryTrace" id="P0A809"/>
<dbReference type="PRO" id="PR:P0A809"/>
<dbReference type="Proteomes" id="UP000000625">
    <property type="component" value="Chromosome"/>
</dbReference>
<dbReference type="GO" id="GO:0005737">
    <property type="term" value="C:cytoplasm"/>
    <property type="evidence" value="ECO:0007669"/>
    <property type="project" value="UniProtKB-SubCell"/>
</dbReference>
<dbReference type="GO" id="GO:0009379">
    <property type="term" value="C:Holliday junction helicase complex"/>
    <property type="evidence" value="ECO:0000314"/>
    <property type="project" value="EcoCyc"/>
</dbReference>
<dbReference type="GO" id="GO:0048476">
    <property type="term" value="C:Holliday junction resolvase complex"/>
    <property type="evidence" value="ECO:0000314"/>
    <property type="project" value="EcoCyc"/>
</dbReference>
<dbReference type="GO" id="GO:0005524">
    <property type="term" value="F:ATP binding"/>
    <property type="evidence" value="ECO:0007669"/>
    <property type="project" value="InterPro"/>
</dbReference>
<dbReference type="GO" id="GO:0000400">
    <property type="term" value="F:four-way junction DNA binding"/>
    <property type="evidence" value="ECO:0000314"/>
    <property type="project" value="EcoCyc"/>
</dbReference>
<dbReference type="GO" id="GO:0009378">
    <property type="term" value="F:four-way junction helicase activity"/>
    <property type="evidence" value="ECO:0000314"/>
    <property type="project" value="EcoCyc"/>
</dbReference>
<dbReference type="GO" id="GO:0042802">
    <property type="term" value="F:identical protein binding"/>
    <property type="evidence" value="ECO:0000314"/>
    <property type="project" value="EcoCyc"/>
</dbReference>
<dbReference type="GO" id="GO:0000725">
    <property type="term" value="P:recombinational repair"/>
    <property type="evidence" value="ECO:0000314"/>
    <property type="project" value="ComplexPortal"/>
</dbReference>
<dbReference type="GO" id="GO:0009314">
    <property type="term" value="P:response to radiation"/>
    <property type="evidence" value="ECO:0000315"/>
    <property type="project" value="EcoCyc"/>
</dbReference>
<dbReference type="GO" id="GO:0009432">
    <property type="term" value="P:SOS response"/>
    <property type="evidence" value="ECO:0000270"/>
    <property type="project" value="EcoCyc"/>
</dbReference>
<dbReference type="CDD" id="cd14332">
    <property type="entry name" value="UBA_RuvA_C"/>
    <property type="match status" value="1"/>
</dbReference>
<dbReference type="FunFam" id="1.10.150.20:FF:000012">
    <property type="entry name" value="Holliday junction ATP-dependent DNA helicase RuvA"/>
    <property type="match status" value="1"/>
</dbReference>
<dbReference type="FunFam" id="1.10.8.10:FF:000008">
    <property type="entry name" value="Holliday junction ATP-dependent DNA helicase RuvA"/>
    <property type="match status" value="1"/>
</dbReference>
<dbReference type="FunFam" id="2.40.50.140:FF:000083">
    <property type="entry name" value="Holliday junction ATP-dependent DNA helicase RuvA"/>
    <property type="match status" value="1"/>
</dbReference>
<dbReference type="Gene3D" id="1.10.150.20">
    <property type="entry name" value="5' to 3' exonuclease, C-terminal subdomain"/>
    <property type="match status" value="1"/>
</dbReference>
<dbReference type="Gene3D" id="1.10.8.10">
    <property type="entry name" value="DNA helicase RuvA subunit, C-terminal domain"/>
    <property type="match status" value="1"/>
</dbReference>
<dbReference type="Gene3D" id="2.40.50.140">
    <property type="entry name" value="Nucleic acid-binding proteins"/>
    <property type="match status" value="1"/>
</dbReference>
<dbReference type="HAMAP" id="MF_00031">
    <property type="entry name" value="DNA_HJ_migration_RuvA"/>
    <property type="match status" value="1"/>
</dbReference>
<dbReference type="InterPro" id="IPR013849">
    <property type="entry name" value="DNA_helicase_Holl-junc_RuvA_I"/>
</dbReference>
<dbReference type="InterPro" id="IPR003583">
    <property type="entry name" value="Hlx-hairpin-Hlx_DNA-bd_motif"/>
</dbReference>
<dbReference type="InterPro" id="IPR012340">
    <property type="entry name" value="NA-bd_OB-fold"/>
</dbReference>
<dbReference type="InterPro" id="IPR000085">
    <property type="entry name" value="RuvA"/>
</dbReference>
<dbReference type="InterPro" id="IPR010994">
    <property type="entry name" value="RuvA_2-like"/>
</dbReference>
<dbReference type="InterPro" id="IPR011114">
    <property type="entry name" value="RuvA_C"/>
</dbReference>
<dbReference type="InterPro" id="IPR036267">
    <property type="entry name" value="RuvA_C_sf"/>
</dbReference>
<dbReference type="NCBIfam" id="TIGR00084">
    <property type="entry name" value="ruvA"/>
    <property type="match status" value="1"/>
</dbReference>
<dbReference type="Pfam" id="PF14520">
    <property type="entry name" value="HHH_5"/>
    <property type="match status" value="1"/>
</dbReference>
<dbReference type="Pfam" id="PF07499">
    <property type="entry name" value="RuvA_C"/>
    <property type="match status" value="1"/>
</dbReference>
<dbReference type="Pfam" id="PF01330">
    <property type="entry name" value="RuvA_N"/>
    <property type="match status" value="1"/>
</dbReference>
<dbReference type="SMART" id="SM00278">
    <property type="entry name" value="HhH1"/>
    <property type="match status" value="2"/>
</dbReference>
<dbReference type="SUPFAM" id="SSF46929">
    <property type="entry name" value="DNA helicase RuvA subunit, C-terminal domain"/>
    <property type="match status" value="1"/>
</dbReference>
<dbReference type="SUPFAM" id="SSF50249">
    <property type="entry name" value="Nucleic acid-binding proteins"/>
    <property type="match status" value="1"/>
</dbReference>
<dbReference type="SUPFAM" id="SSF47781">
    <property type="entry name" value="RuvA domain 2-like"/>
    <property type="match status" value="1"/>
</dbReference>
<evidence type="ECO:0000255" key="1">
    <source>
        <dbReference type="HAMAP-Rule" id="MF_00031"/>
    </source>
</evidence>
<evidence type="ECO:0000269" key="2">
    <source>
    </source>
</evidence>
<evidence type="ECO:0000269" key="3">
    <source>
    </source>
</evidence>
<evidence type="ECO:0000269" key="4">
    <source>
    </source>
</evidence>
<evidence type="ECO:0000269" key="5">
    <source>
    </source>
</evidence>
<evidence type="ECO:0000269" key="6">
    <source>
    </source>
</evidence>
<evidence type="ECO:0000269" key="7">
    <source>
    </source>
</evidence>
<evidence type="ECO:0000269" key="8">
    <source>
    </source>
</evidence>
<evidence type="ECO:0000269" key="9">
    <source>
    </source>
</evidence>
<evidence type="ECO:0000269" key="10">
    <source>
    </source>
</evidence>
<evidence type="ECO:0000269" key="11">
    <source>
    </source>
</evidence>
<evidence type="ECO:0000269" key="12">
    <source>
    </source>
</evidence>
<evidence type="ECO:0000269" key="13">
    <source>
    </source>
</evidence>
<evidence type="ECO:0000269" key="14">
    <source>
    </source>
</evidence>
<evidence type="ECO:0000269" key="15">
    <source>
    </source>
</evidence>
<evidence type="ECO:0000269" key="16">
    <source>
    </source>
</evidence>
<evidence type="ECO:0000269" key="17">
    <source>
    </source>
</evidence>
<evidence type="ECO:0000269" key="18">
    <source>
    </source>
</evidence>
<evidence type="ECO:0000269" key="19">
    <source>
    </source>
</evidence>
<evidence type="ECO:0000269" key="20">
    <source>
    </source>
</evidence>
<evidence type="ECO:0000269" key="21">
    <source>
    </source>
</evidence>
<evidence type="ECO:0000269" key="22">
    <source>
    </source>
</evidence>
<evidence type="ECO:0000269" key="23">
    <source>
    </source>
</evidence>
<evidence type="ECO:0000269" key="24">
    <source>
    </source>
</evidence>
<evidence type="ECO:0000269" key="25">
    <source>
    </source>
</evidence>
<evidence type="ECO:0000269" key="26">
    <source>
    </source>
</evidence>
<evidence type="ECO:0000269" key="27">
    <source>
    </source>
</evidence>
<evidence type="ECO:0000269" key="28">
    <source>
    </source>
</evidence>
<evidence type="ECO:0000269" key="29">
    <source>
    </source>
</evidence>
<evidence type="ECO:0000269" key="30">
    <source>
    </source>
</evidence>
<evidence type="ECO:0000269" key="31">
    <source>
    </source>
</evidence>
<evidence type="ECO:0000269" key="32">
    <source>
    </source>
</evidence>
<evidence type="ECO:0000303" key="33">
    <source>
    </source>
</evidence>
<evidence type="ECO:0000303" key="34">
    <source>
    </source>
</evidence>
<evidence type="ECO:0000305" key="35"/>
<evidence type="ECO:0000305" key="36">
    <source>
    </source>
</evidence>
<evidence type="ECO:0000312" key="37">
    <source>
        <dbReference type="EMBL" id="AAA24612.1"/>
    </source>
</evidence>
<evidence type="ECO:0000312" key="38">
    <source>
        <dbReference type="EMBL" id="AAC74931.1"/>
    </source>
</evidence>
<evidence type="ECO:0000312" key="39">
    <source>
        <dbReference type="EMBL" id="BAA01034.1"/>
    </source>
</evidence>
<evidence type="ECO:0000312" key="40">
    <source>
        <dbReference type="EMBL" id="BAA15672.1"/>
    </source>
</evidence>
<evidence type="ECO:0000312" key="41">
    <source>
        <dbReference type="EMBL" id="CAA30119.1"/>
    </source>
</evidence>
<evidence type="ECO:0000312" key="42">
    <source>
        <dbReference type="PDB" id="1C7Y"/>
    </source>
</evidence>
<evidence type="ECO:0007744" key="43">
    <source>
        <dbReference type="PDB" id="1BDX"/>
    </source>
</evidence>
<evidence type="ECO:0007744" key="44">
    <source>
        <dbReference type="PDB" id="1C7Y"/>
    </source>
</evidence>
<evidence type="ECO:0007744" key="45">
    <source>
        <dbReference type="PDB" id="1CUK"/>
    </source>
</evidence>
<evidence type="ECO:0007744" key="46">
    <source>
        <dbReference type="PDB" id="1D8L"/>
    </source>
</evidence>
<evidence type="ECO:0007744" key="47">
    <source>
        <dbReference type="PDB" id="1HJP"/>
    </source>
</evidence>
<evidence type="ECO:0007829" key="48">
    <source>
        <dbReference type="PDB" id="1C7Y"/>
    </source>
</evidence>
<evidence type="ECO:0007829" key="49">
    <source>
        <dbReference type="PDB" id="1CUK"/>
    </source>
</evidence>